<reference key="1">
    <citation type="submission" date="2005-03" db="EMBL/GenBank/DDBJ databases">
        <title>Comparison of the complete genome sequences of Rhodococcus erythropolis PR4 and Rhodococcus opacus B4.</title>
        <authorList>
            <person name="Takarada H."/>
            <person name="Sekine M."/>
            <person name="Hosoyama A."/>
            <person name="Yamada R."/>
            <person name="Fujisawa T."/>
            <person name="Omata S."/>
            <person name="Shimizu A."/>
            <person name="Tsukatani N."/>
            <person name="Tanikawa S."/>
            <person name="Fujita N."/>
            <person name="Harayama S."/>
        </authorList>
    </citation>
    <scope>NUCLEOTIDE SEQUENCE [LARGE SCALE GENOMIC DNA]</scope>
    <source>
        <strain>PR4 / NBRC 100887</strain>
    </source>
</reference>
<comment type="function">
    <text evidence="1">This protein is located at the 30S-50S ribosomal subunit interface and may play a role in the structure and function of the aminoacyl-tRNA binding site.</text>
</comment>
<comment type="similarity">
    <text evidence="1">Belongs to the bacterial ribosomal protein bL19 family.</text>
</comment>
<feature type="chain" id="PRO_1000205899" description="Large ribosomal subunit protein bL19">
    <location>
        <begin position="1"/>
        <end position="113"/>
    </location>
</feature>
<accession>C0ZXT0</accession>
<protein>
    <recommendedName>
        <fullName evidence="1">Large ribosomal subunit protein bL19</fullName>
    </recommendedName>
    <alternativeName>
        <fullName evidence="2">50S ribosomal protein L19</fullName>
    </alternativeName>
</protein>
<keyword id="KW-0687">Ribonucleoprotein</keyword>
<keyword id="KW-0689">Ribosomal protein</keyword>
<evidence type="ECO:0000255" key="1">
    <source>
        <dbReference type="HAMAP-Rule" id="MF_00402"/>
    </source>
</evidence>
<evidence type="ECO:0000305" key="2"/>
<organism>
    <name type="scientific">Rhodococcus erythropolis (strain PR4 / NBRC 100887)</name>
    <dbReference type="NCBI Taxonomy" id="234621"/>
    <lineage>
        <taxon>Bacteria</taxon>
        <taxon>Bacillati</taxon>
        <taxon>Actinomycetota</taxon>
        <taxon>Actinomycetes</taxon>
        <taxon>Mycobacteriales</taxon>
        <taxon>Nocardiaceae</taxon>
        <taxon>Rhodococcus</taxon>
        <taxon>Rhodococcus erythropolis group</taxon>
    </lineage>
</organism>
<gene>
    <name evidence="1" type="primary">rplS</name>
    <name type="ordered locus">RER_24570</name>
</gene>
<proteinExistence type="inferred from homology"/>
<dbReference type="EMBL" id="AP008957">
    <property type="protein sequence ID" value="BAH33165.1"/>
    <property type="molecule type" value="Genomic_DNA"/>
</dbReference>
<dbReference type="RefSeq" id="WP_003942791.1">
    <property type="nucleotide sequence ID" value="NC_012490.1"/>
</dbReference>
<dbReference type="SMR" id="C0ZXT0"/>
<dbReference type="GeneID" id="93803451"/>
<dbReference type="KEGG" id="rer:RER_24570"/>
<dbReference type="eggNOG" id="COG0335">
    <property type="taxonomic scope" value="Bacteria"/>
</dbReference>
<dbReference type="HOGENOM" id="CLU_103507_2_1_11"/>
<dbReference type="Proteomes" id="UP000002204">
    <property type="component" value="Chromosome"/>
</dbReference>
<dbReference type="GO" id="GO:0022625">
    <property type="term" value="C:cytosolic large ribosomal subunit"/>
    <property type="evidence" value="ECO:0007669"/>
    <property type="project" value="TreeGrafter"/>
</dbReference>
<dbReference type="GO" id="GO:0003735">
    <property type="term" value="F:structural constituent of ribosome"/>
    <property type="evidence" value="ECO:0007669"/>
    <property type="project" value="InterPro"/>
</dbReference>
<dbReference type="GO" id="GO:0006412">
    <property type="term" value="P:translation"/>
    <property type="evidence" value="ECO:0007669"/>
    <property type="project" value="UniProtKB-UniRule"/>
</dbReference>
<dbReference type="FunFam" id="2.30.30.790:FF:000001">
    <property type="entry name" value="50S ribosomal protein L19"/>
    <property type="match status" value="1"/>
</dbReference>
<dbReference type="Gene3D" id="2.30.30.790">
    <property type="match status" value="1"/>
</dbReference>
<dbReference type="HAMAP" id="MF_00402">
    <property type="entry name" value="Ribosomal_bL19"/>
    <property type="match status" value="1"/>
</dbReference>
<dbReference type="InterPro" id="IPR001857">
    <property type="entry name" value="Ribosomal_bL19"/>
</dbReference>
<dbReference type="InterPro" id="IPR018257">
    <property type="entry name" value="Ribosomal_bL19_CS"/>
</dbReference>
<dbReference type="InterPro" id="IPR038657">
    <property type="entry name" value="Ribosomal_bL19_sf"/>
</dbReference>
<dbReference type="InterPro" id="IPR008991">
    <property type="entry name" value="Translation_prot_SH3-like_sf"/>
</dbReference>
<dbReference type="NCBIfam" id="TIGR01024">
    <property type="entry name" value="rplS_bact"/>
    <property type="match status" value="1"/>
</dbReference>
<dbReference type="PANTHER" id="PTHR15680:SF9">
    <property type="entry name" value="LARGE RIBOSOMAL SUBUNIT PROTEIN BL19M"/>
    <property type="match status" value="1"/>
</dbReference>
<dbReference type="PANTHER" id="PTHR15680">
    <property type="entry name" value="RIBOSOMAL PROTEIN L19"/>
    <property type="match status" value="1"/>
</dbReference>
<dbReference type="Pfam" id="PF01245">
    <property type="entry name" value="Ribosomal_L19"/>
    <property type="match status" value="1"/>
</dbReference>
<dbReference type="PIRSF" id="PIRSF002191">
    <property type="entry name" value="Ribosomal_L19"/>
    <property type="match status" value="1"/>
</dbReference>
<dbReference type="PRINTS" id="PR00061">
    <property type="entry name" value="RIBOSOMALL19"/>
</dbReference>
<dbReference type="SUPFAM" id="SSF50104">
    <property type="entry name" value="Translation proteins SH3-like domain"/>
    <property type="match status" value="1"/>
</dbReference>
<dbReference type="PROSITE" id="PS01015">
    <property type="entry name" value="RIBOSOMAL_L19"/>
    <property type="match status" value="1"/>
</dbReference>
<name>RL19_RHOE4</name>
<sequence>MNTLDFLDKKSLRDDIPEFRPGDTLNVNVKVIEGSKERVQVFKGVVIRRQGGGVRETFTVRKVSFGVGVERTFPVHSPTLASIEVLTRGDVRRAKLYYLRELRGKKAKIKEKR</sequence>